<sequence>MAFNSTPPVSPGGEAQQRPPRFPGEDTTPTSQKEIWGWYAYGIAAEVFAVCGVGSFLPLTLEQLAREHGTLLSSHLPCVRFSSPSTAPGNGTTTATFRRDGTDNDQCVVSVLGLQVNTASFAMYTFSLAVLVQALTLISFSALADYENNRKTLLLAFGFIGSMTSMLFIFIAPPVYILASLLVVVGVTCLGSSFVVLNSFLPVLVANDPSIQTAHKEQGEELSPVNSNGEFVRFEDLDEEISRDSDDHFTTGHRPKTKAAGSASPELQLSTRISSKGVGLGYCAAVLVQILSILMLFALSKTSLPKISGTLPLRFVLLLVGIWWFSFTMVSRRWLRDRPGPPLASSKGAARNSRWRIWLRLIGFAWKSLWKTAKVAVKLREVIIFLIAWFLLSDAMATVSGTAILFARTELKMSTTAVGLLSITATLSGMAGAFLWPVVSRRLRLKSNHTIMLCIALFEVIPLYGMLAYIPLFKKWGVVGLQQPWEIFPLGIVHGLVSGGLSSYCRSFFGLLIPPGSEAAFYALYAATDKGSSFIGPAIVGMLIDATGQVRSGFFFIAVLILLPIPLIWMVNAEKGRQDGLAMADILEKSHREHASEYGGPSEEAEGLLARDI</sequence>
<evidence type="ECO:0000250" key="1"/>
<evidence type="ECO:0000255" key="2"/>
<evidence type="ECO:0000256" key="3">
    <source>
        <dbReference type="SAM" id="MobiDB-lite"/>
    </source>
</evidence>
<evidence type="ECO:0000305" key="4"/>
<gene>
    <name type="primary">atg22-2</name>
    <name type="ORF">AFUA_2G15370</name>
</gene>
<reference key="1">
    <citation type="journal article" date="2005" name="Nature">
        <title>Genomic sequence of the pathogenic and allergenic filamentous fungus Aspergillus fumigatus.</title>
        <authorList>
            <person name="Nierman W.C."/>
            <person name="Pain A."/>
            <person name="Anderson M.J."/>
            <person name="Wortman J.R."/>
            <person name="Kim H.S."/>
            <person name="Arroyo J."/>
            <person name="Berriman M."/>
            <person name="Abe K."/>
            <person name="Archer D.B."/>
            <person name="Bermejo C."/>
            <person name="Bennett J.W."/>
            <person name="Bowyer P."/>
            <person name="Chen D."/>
            <person name="Collins M."/>
            <person name="Coulsen R."/>
            <person name="Davies R."/>
            <person name="Dyer P.S."/>
            <person name="Farman M.L."/>
            <person name="Fedorova N."/>
            <person name="Fedorova N.D."/>
            <person name="Feldblyum T.V."/>
            <person name="Fischer R."/>
            <person name="Fosker N."/>
            <person name="Fraser A."/>
            <person name="Garcia J.L."/>
            <person name="Garcia M.J."/>
            <person name="Goble A."/>
            <person name="Goldman G.H."/>
            <person name="Gomi K."/>
            <person name="Griffith-Jones S."/>
            <person name="Gwilliam R."/>
            <person name="Haas B.J."/>
            <person name="Haas H."/>
            <person name="Harris D.E."/>
            <person name="Horiuchi H."/>
            <person name="Huang J."/>
            <person name="Humphray S."/>
            <person name="Jimenez J."/>
            <person name="Keller N."/>
            <person name="Khouri H."/>
            <person name="Kitamoto K."/>
            <person name="Kobayashi T."/>
            <person name="Konzack S."/>
            <person name="Kulkarni R."/>
            <person name="Kumagai T."/>
            <person name="Lafton A."/>
            <person name="Latge J.-P."/>
            <person name="Li W."/>
            <person name="Lord A."/>
            <person name="Lu C."/>
            <person name="Majoros W.H."/>
            <person name="May G.S."/>
            <person name="Miller B.L."/>
            <person name="Mohamoud Y."/>
            <person name="Molina M."/>
            <person name="Monod M."/>
            <person name="Mouyna I."/>
            <person name="Mulligan S."/>
            <person name="Murphy L.D."/>
            <person name="O'Neil S."/>
            <person name="Paulsen I."/>
            <person name="Penalva M.A."/>
            <person name="Pertea M."/>
            <person name="Price C."/>
            <person name="Pritchard B.L."/>
            <person name="Quail M.A."/>
            <person name="Rabbinowitsch E."/>
            <person name="Rawlins N."/>
            <person name="Rajandream M.A."/>
            <person name="Reichard U."/>
            <person name="Renauld H."/>
            <person name="Robson G.D."/>
            <person name="Rodriguez de Cordoba S."/>
            <person name="Rodriguez-Pena J.M."/>
            <person name="Ronning C.M."/>
            <person name="Rutter S."/>
            <person name="Salzberg S.L."/>
            <person name="Sanchez M."/>
            <person name="Sanchez-Ferrero J.C."/>
            <person name="Saunders D."/>
            <person name="Seeger K."/>
            <person name="Squares R."/>
            <person name="Squares S."/>
            <person name="Takeuchi M."/>
            <person name="Tekaia F."/>
            <person name="Turner G."/>
            <person name="Vazquez de Aldana C.R."/>
            <person name="Weidman J."/>
            <person name="White O."/>
            <person name="Woodward J.R."/>
            <person name="Yu J.-H."/>
            <person name="Fraser C.M."/>
            <person name="Galagan J.E."/>
            <person name="Asai K."/>
            <person name="Machida M."/>
            <person name="Hall N."/>
            <person name="Barrell B.G."/>
            <person name="Denning D.W."/>
        </authorList>
    </citation>
    <scope>NUCLEOTIDE SEQUENCE [LARGE SCALE GENOMIC DNA]</scope>
    <source>
        <strain>ATCC MYA-4609 / CBS 101355 / FGSC A1100 / Af293</strain>
    </source>
</reference>
<organism>
    <name type="scientific">Aspergillus fumigatus (strain ATCC MYA-4609 / CBS 101355 / FGSC A1100 / Af293)</name>
    <name type="common">Neosartorya fumigata</name>
    <dbReference type="NCBI Taxonomy" id="330879"/>
    <lineage>
        <taxon>Eukaryota</taxon>
        <taxon>Fungi</taxon>
        <taxon>Dikarya</taxon>
        <taxon>Ascomycota</taxon>
        <taxon>Pezizomycotina</taxon>
        <taxon>Eurotiomycetes</taxon>
        <taxon>Eurotiomycetidae</taxon>
        <taxon>Eurotiales</taxon>
        <taxon>Aspergillaceae</taxon>
        <taxon>Aspergillus</taxon>
        <taxon>Aspergillus subgen. Fumigati</taxon>
    </lineage>
</organism>
<proteinExistence type="inferred from homology"/>
<dbReference type="EMBL" id="AAHF01000001">
    <property type="protein sequence ID" value="EAL93834.1"/>
    <property type="molecule type" value="Genomic_DNA"/>
</dbReference>
<dbReference type="RefSeq" id="XP_755872.1">
    <property type="nucleotide sequence ID" value="XM_750779.1"/>
</dbReference>
<dbReference type="FunCoup" id="Q4WZY1">
    <property type="interactions" value="24"/>
</dbReference>
<dbReference type="STRING" id="330879.Q4WZY1"/>
<dbReference type="GlyCosmos" id="Q4WZY1">
    <property type="glycosylation" value="2 sites, No reported glycans"/>
</dbReference>
<dbReference type="EnsemblFungi" id="EAL93834">
    <property type="protein sequence ID" value="EAL93834"/>
    <property type="gene ID" value="AFUA_2G15370"/>
</dbReference>
<dbReference type="GeneID" id="3513324"/>
<dbReference type="KEGG" id="afm:AFUA_2G15370"/>
<dbReference type="eggNOG" id="ENOG502QVD3">
    <property type="taxonomic scope" value="Eukaryota"/>
</dbReference>
<dbReference type="HOGENOM" id="CLU_017518_1_0_1"/>
<dbReference type="InParanoid" id="Q4WZY1"/>
<dbReference type="OMA" id="QPWEIFP"/>
<dbReference type="OrthoDB" id="192733at2759"/>
<dbReference type="Proteomes" id="UP000002530">
    <property type="component" value="Chromosome 2"/>
</dbReference>
<dbReference type="GO" id="GO:0005774">
    <property type="term" value="C:vacuolar membrane"/>
    <property type="evidence" value="ECO:0007669"/>
    <property type="project" value="UniProtKB-SubCell"/>
</dbReference>
<dbReference type="GO" id="GO:0032974">
    <property type="term" value="P:amino acid transmembrane export from vacuole"/>
    <property type="evidence" value="ECO:0000318"/>
    <property type="project" value="GO_Central"/>
</dbReference>
<dbReference type="GO" id="GO:0006914">
    <property type="term" value="P:autophagy"/>
    <property type="evidence" value="ECO:0007669"/>
    <property type="project" value="UniProtKB-KW"/>
</dbReference>
<dbReference type="CDD" id="cd17483">
    <property type="entry name" value="MFS_Atg22_like"/>
    <property type="match status" value="1"/>
</dbReference>
<dbReference type="Gene3D" id="1.20.1250.20">
    <property type="entry name" value="MFS general substrate transporter like domains"/>
    <property type="match status" value="1"/>
</dbReference>
<dbReference type="InterPro" id="IPR044738">
    <property type="entry name" value="Atg22"/>
</dbReference>
<dbReference type="InterPro" id="IPR024671">
    <property type="entry name" value="Atg22-like"/>
</dbReference>
<dbReference type="InterPro" id="IPR050495">
    <property type="entry name" value="ATG22/LtaA_families"/>
</dbReference>
<dbReference type="InterPro" id="IPR036259">
    <property type="entry name" value="MFS_trans_sf"/>
</dbReference>
<dbReference type="PANTHER" id="PTHR23519">
    <property type="entry name" value="AUTOPHAGY-RELATED PROTEIN 22"/>
    <property type="match status" value="1"/>
</dbReference>
<dbReference type="PANTHER" id="PTHR23519:SF3">
    <property type="entry name" value="AUTOPHAGY-RELATED PROTEIN 22-2"/>
    <property type="match status" value="1"/>
</dbReference>
<dbReference type="Pfam" id="PF11700">
    <property type="entry name" value="ATG22"/>
    <property type="match status" value="1"/>
</dbReference>
<dbReference type="SUPFAM" id="SSF103473">
    <property type="entry name" value="MFS general substrate transporter"/>
    <property type="match status" value="1"/>
</dbReference>
<accession>Q4WZY1</accession>
<feature type="chain" id="PRO_0000207618" description="Autophagy-related protein 22-2">
    <location>
        <begin position="1"/>
        <end position="613"/>
    </location>
</feature>
<feature type="transmembrane region" description="Helical" evidence="2">
    <location>
        <begin position="41"/>
        <end position="61"/>
    </location>
</feature>
<feature type="transmembrane region" description="Helical" evidence="2">
    <location>
        <begin position="120"/>
        <end position="140"/>
    </location>
</feature>
<feature type="transmembrane region" description="Helical" evidence="2">
    <location>
        <begin position="167"/>
        <end position="187"/>
    </location>
</feature>
<feature type="transmembrane region" description="Helical" evidence="2">
    <location>
        <begin position="189"/>
        <end position="209"/>
    </location>
</feature>
<feature type="transmembrane region" description="Helical" evidence="2">
    <location>
        <begin position="278"/>
        <end position="298"/>
    </location>
</feature>
<feature type="transmembrane region" description="Helical" evidence="2">
    <location>
        <begin position="307"/>
        <end position="327"/>
    </location>
</feature>
<feature type="transmembrane region" description="Helical" evidence="2">
    <location>
        <begin position="382"/>
        <end position="402"/>
    </location>
</feature>
<feature type="transmembrane region" description="Helical" evidence="2">
    <location>
        <begin position="418"/>
        <end position="438"/>
    </location>
</feature>
<feature type="transmembrane region" description="Helical" evidence="2">
    <location>
        <begin position="453"/>
        <end position="473"/>
    </location>
</feature>
<feature type="transmembrane region" description="Helical" evidence="2">
    <location>
        <begin position="477"/>
        <end position="497"/>
    </location>
</feature>
<feature type="transmembrane region" description="Helical" evidence="2">
    <location>
        <begin position="508"/>
        <end position="528"/>
    </location>
</feature>
<feature type="transmembrane region" description="Helical" evidence="2">
    <location>
        <begin position="553"/>
        <end position="573"/>
    </location>
</feature>
<feature type="region of interest" description="Disordered" evidence="3">
    <location>
        <begin position="1"/>
        <end position="30"/>
    </location>
</feature>
<feature type="region of interest" description="Disordered" evidence="3">
    <location>
        <begin position="592"/>
        <end position="613"/>
    </location>
</feature>
<feature type="glycosylation site" description="N-linked (GlcNAc...) asparagine" evidence="2">
    <location>
        <position position="90"/>
    </location>
</feature>
<feature type="glycosylation site" description="N-linked (GlcNAc...) asparagine" evidence="2">
    <location>
        <position position="448"/>
    </location>
</feature>
<name>AT222_ASPFU</name>
<protein>
    <recommendedName>
        <fullName>Autophagy-related protein 22-2</fullName>
    </recommendedName>
</protein>
<keyword id="KW-0029">Amino-acid transport</keyword>
<keyword id="KW-0072">Autophagy</keyword>
<keyword id="KW-0325">Glycoprotein</keyword>
<keyword id="KW-0472">Membrane</keyword>
<keyword id="KW-1185">Reference proteome</keyword>
<keyword id="KW-0812">Transmembrane</keyword>
<keyword id="KW-1133">Transmembrane helix</keyword>
<keyword id="KW-0813">Transport</keyword>
<keyword id="KW-0926">Vacuole</keyword>
<comment type="function">
    <text evidence="1">Vacuolar effluxer which mediate the efflux of amino acids resulting from autophagic degradation. The release of autophagic amino acids allows the maintenance of protein synthesis and viability during nitrogen starvation (By similarity).</text>
</comment>
<comment type="subcellular location">
    <subcellularLocation>
        <location evidence="1">Vacuole membrane</location>
        <topology evidence="1">Multi-pass membrane protein</topology>
    </subcellularLocation>
    <text evidence="1">Vacuole and punctate structures.</text>
</comment>
<comment type="similarity">
    <text evidence="4">Belongs to the ATG22 family.</text>
</comment>